<evidence type="ECO:0000255" key="1">
    <source>
        <dbReference type="HAMAP-Rule" id="MF_00418"/>
    </source>
</evidence>
<evidence type="ECO:0000305" key="2"/>
<gene>
    <name evidence="1" type="primary">dapA</name>
    <name type="ordered locus">SG1726</name>
</gene>
<comment type="function">
    <text evidence="1">Catalyzes the condensation of (S)-aspartate-beta-semialdehyde [(S)-ASA] and pyruvate to 4-hydroxy-tetrahydrodipicolinate (HTPA).</text>
</comment>
<comment type="catalytic activity">
    <reaction evidence="1">
        <text>L-aspartate 4-semialdehyde + pyruvate = (2S,4S)-4-hydroxy-2,3,4,5-tetrahydrodipicolinate + H2O + H(+)</text>
        <dbReference type="Rhea" id="RHEA:34171"/>
        <dbReference type="ChEBI" id="CHEBI:15361"/>
        <dbReference type="ChEBI" id="CHEBI:15377"/>
        <dbReference type="ChEBI" id="CHEBI:15378"/>
        <dbReference type="ChEBI" id="CHEBI:67139"/>
        <dbReference type="ChEBI" id="CHEBI:537519"/>
        <dbReference type="EC" id="4.3.3.7"/>
    </reaction>
</comment>
<comment type="pathway">
    <text evidence="1">Amino-acid biosynthesis; L-lysine biosynthesis via DAP pathway; (S)-tetrahydrodipicolinate from L-aspartate: step 3/4.</text>
</comment>
<comment type="subunit">
    <text evidence="1">Homotetramer; dimer of dimers.</text>
</comment>
<comment type="subcellular location">
    <subcellularLocation>
        <location evidence="1">Cytoplasm</location>
    </subcellularLocation>
</comment>
<comment type="similarity">
    <text evidence="1">Belongs to the DapA family.</text>
</comment>
<comment type="caution">
    <text evidence="2">Was originally thought to be a dihydrodipicolinate synthase (DHDPS), catalyzing the condensation of (S)-aspartate-beta-semialdehyde [(S)-ASA] and pyruvate to dihydrodipicolinate (DHDP). However, it was shown in E.coli that the product of the enzymatic reaction is not dihydrodipicolinate but in fact (4S)-4-hydroxy-2,3,4,5-tetrahydro-(2S)-dipicolinic acid (HTPA), and that the consecutive dehydration reaction leading to DHDP is not spontaneous but catalyzed by DapB.</text>
</comment>
<protein>
    <recommendedName>
        <fullName evidence="1">4-hydroxy-tetrahydrodipicolinate synthase</fullName>
        <shortName evidence="1">HTPA synthase</shortName>
        <ecNumber evidence="1">4.3.3.7</ecNumber>
    </recommendedName>
</protein>
<sequence>MFTGSIVALVTPMDEKGAIDRVSLKKLIDYHVASGTAAIVAVGTTGETSTLSHEEHGDVVMWTLELSDGRVPVIAGTGANSTSEAVSLTRRFNDSGVVGCLSVTPYYNRPSQEGLFQHFRAIAERSDLPQILYNVPARTGCDMLPPTVARLAEIKNIIGIKEATGNLSRVSQIQELVNDDFLLLSGDDASALDFIQLGGKGVISVTANVAAKEMAQLCALAADGNYADARRLNQRLMPLHQKLFFEPSPIPVKWACKALGLMATDTLRLPMTPLTRAGSRVVRQALTDAGLL</sequence>
<dbReference type="EC" id="4.3.3.7" evidence="1"/>
<dbReference type="EMBL" id="AP008232">
    <property type="protein sequence ID" value="BAE75001.1"/>
    <property type="molecule type" value="Genomic_DNA"/>
</dbReference>
<dbReference type="RefSeq" id="WP_011411550.1">
    <property type="nucleotide sequence ID" value="NC_007712.1"/>
</dbReference>
<dbReference type="SMR" id="Q2NS74"/>
<dbReference type="STRING" id="343509.SG1726"/>
<dbReference type="KEGG" id="sgl:SG1726"/>
<dbReference type="eggNOG" id="COG0329">
    <property type="taxonomic scope" value="Bacteria"/>
</dbReference>
<dbReference type="HOGENOM" id="CLU_049343_7_1_6"/>
<dbReference type="OrthoDB" id="9782828at2"/>
<dbReference type="BioCyc" id="SGLO343509:SGP1_RS15650-MONOMER"/>
<dbReference type="UniPathway" id="UPA00034">
    <property type="reaction ID" value="UER00017"/>
</dbReference>
<dbReference type="Proteomes" id="UP000001932">
    <property type="component" value="Chromosome"/>
</dbReference>
<dbReference type="GO" id="GO:0005829">
    <property type="term" value="C:cytosol"/>
    <property type="evidence" value="ECO:0007669"/>
    <property type="project" value="TreeGrafter"/>
</dbReference>
<dbReference type="GO" id="GO:0008840">
    <property type="term" value="F:4-hydroxy-tetrahydrodipicolinate synthase activity"/>
    <property type="evidence" value="ECO:0007669"/>
    <property type="project" value="UniProtKB-UniRule"/>
</dbReference>
<dbReference type="GO" id="GO:0019877">
    <property type="term" value="P:diaminopimelate biosynthetic process"/>
    <property type="evidence" value="ECO:0007669"/>
    <property type="project" value="UniProtKB-UniRule"/>
</dbReference>
<dbReference type="GO" id="GO:0009089">
    <property type="term" value="P:lysine biosynthetic process via diaminopimelate"/>
    <property type="evidence" value="ECO:0007669"/>
    <property type="project" value="UniProtKB-UniRule"/>
</dbReference>
<dbReference type="CDD" id="cd00950">
    <property type="entry name" value="DHDPS"/>
    <property type="match status" value="1"/>
</dbReference>
<dbReference type="FunFam" id="3.20.20.70:FF:000046">
    <property type="entry name" value="4-hydroxy-tetrahydrodipicolinate synthase"/>
    <property type="match status" value="1"/>
</dbReference>
<dbReference type="Gene3D" id="3.20.20.70">
    <property type="entry name" value="Aldolase class I"/>
    <property type="match status" value="1"/>
</dbReference>
<dbReference type="HAMAP" id="MF_00418">
    <property type="entry name" value="DapA"/>
    <property type="match status" value="1"/>
</dbReference>
<dbReference type="InterPro" id="IPR013785">
    <property type="entry name" value="Aldolase_TIM"/>
</dbReference>
<dbReference type="InterPro" id="IPR005263">
    <property type="entry name" value="DapA"/>
</dbReference>
<dbReference type="InterPro" id="IPR002220">
    <property type="entry name" value="DapA-like"/>
</dbReference>
<dbReference type="InterPro" id="IPR020625">
    <property type="entry name" value="Schiff_base-form_aldolases_AS"/>
</dbReference>
<dbReference type="NCBIfam" id="TIGR00674">
    <property type="entry name" value="dapA"/>
    <property type="match status" value="1"/>
</dbReference>
<dbReference type="PANTHER" id="PTHR12128:SF66">
    <property type="entry name" value="4-HYDROXY-2-OXOGLUTARATE ALDOLASE, MITOCHONDRIAL"/>
    <property type="match status" value="1"/>
</dbReference>
<dbReference type="PANTHER" id="PTHR12128">
    <property type="entry name" value="DIHYDRODIPICOLINATE SYNTHASE"/>
    <property type="match status" value="1"/>
</dbReference>
<dbReference type="Pfam" id="PF00701">
    <property type="entry name" value="DHDPS"/>
    <property type="match status" value="1"/>
</dbReference>
<dbReference type="PIRSF" id="PIRSF001365">
    <property type="entry name" value="DHDPS"/>
    <property type="match status" value="1"/>
</dbReference>
<dbReference type="PRINTS" id="PR00146">
    <property type="entry name" value="DHPICSNTHASE"/>
</dbReference>
<dbReference type="SMART" id="SM01130">
    <property type="entry name" value="DHDPS"/>
    <property type="match status" value="1"/>
</dbReference>
<dbReference type="SUPFAM" id="SSF51569">
    <property type="entry name" value="Aldolase"/>
    <property type="match status" value="1"/>
</dbReference>
<dbReference type="PROSITE" id="PS00666">
    <property type="entry name" value="DHDPS_2"/>
    <property type="match status" value="1"/>
</dbReference>
<feature type="chain" id="PRO_1000050275" description="4-hydroxy-tetrahydrodipicolinate synthase">
    <location>
        <begin position="1"/>
        <end position="292"/>
    </location>
</feature>
<feature type="active site" description="Proton donor/acceptor" evidence="1">
    <location>
        <position position="133"/>
    </location>
</feature>
<feature type="active site" description="Schiff-base intermediate with substrate" evidence="1">
    <location>
        <position position="161"/>
    </location>
</feature>
<feature type="binding site" evidence="1">
    <location>
        <position position="45"/>
    </location>
    <ligand>
        <name>pyruvate</name>
        <dbReference type="ChEBI" id="CHEBI:15361"/>
    </ligand>
</feature>
<feature type="binding site" evidence="1">
    <location>
        <position position="203"/>
    </location>
    <ligand>
        <name>pyruvate</name>
        <dbReference type="ChEBI" id="CHEBI:15361"/>
    </ligand>
</feature>
<feature type="site" description="Part of a proton relay during catalysis" evidence="1">
    <location>
        <position position="44"/>
    </location>
</feature>
<feature type="site" description="Part of a proton relay during catalysis" evidence="1">
    <location>
        <position position="107"/>
    </location>
</feature>
<keyword id="KW-0028">Amino-acid biosynthesis</keyword>
<keyword id="KW-0963">Cytoplasm</keyword>
<keyword id="KW-0220">Diaminopimelate biosynthesis</keyword>
<keyword id="KW-0456">Lyase</keyword>
<keyword id="KW-0457">Lysine biosynthesis</keyword>
<keyword id="KW-0704">Schiff base</keyword>
<name>DAPA_SODGM</name>
<organism>
    <name type="scientific">Sodalis glossinidius (strain morsitans)</name>
    <dbReference type="NCBI Taxonomy" id="343509"/>
    <lineage>
        <taxon>Bacteria</taxon>
        <taxon>Pseudomonadati</taxon>
        <taxon>Pseudomonadota</taxon>
        <taxon>Gammaproteobacteria</taxon>
        <taxon>Enterobacterales</taxon>
        <taxon>Bruguierivoracaceae</taxon>
        <taxon>Sodalis</taxon>
    </lineage>
</organism>
<accession>Q2NS74</accession>
<reference key="1">
    <citation type="journal article" date="2006" name="Genome Res.">
        <title>Massive genome erosion and functional adaptations provide insights into the symbiotic lifestyle of Sodalis glossinidius in the tsetse host.</title>
        <authorList>
            <person name="Toh H."/>
            <person name="Weiss B.L."/>
            <person name="Perkin S.A.H."/>
            <person name="Yamashita A."/>
            <person name="Oshima K."/>
            <person name="Hattori M."/>
            <person name="Aksoy S."/>
        </authorList>
    </citation>
    <scope>NUCLEOTIDE SEQUENCE [LARGE SCALE GENOMIC DNA]</scope>
    <source>
        <strain>morsitans</strain>
    </source>
</reference>
<proteinExistence type="inferred from homology"/>